<dbReference type="EC" id="2.5.1.55" evidence="1"/>
<dbReference type="EMBL" id="CP000746">
    <property type="protein sequence ID" value="ABR74792.1"/>
    <property type="molecule type" value="Genomic_DNA"/>
</dbReference>
<dbReference type="RefSeq" id="WP_012073169.1">
    <property type="nucleotide sequence ID" value="NC_009655.1"/>
</dbReference>
<dbReference type="SMR" id="A6VP95"/>
<dbReference type="STRING" id="339671.Asuc_1433"/>
<dbReference type="KEGG" id="asu:Asuc_1433"/>
<dbReference type="eggNOG" id="COG2877">
    <property type="taxonomic scope" value="Bacteria"/>
</dbReference>
<dbReference type="HOGENOM" id="CLU_036666_0_0_6"/>
<dbReference type="OrthoDB" id="9776934at2"/>
<dbReference type="UniPathway" id="UPA00030"/>
<dbReference type="UniPathway" id="UPA00357">
    <property type="reaction ID" value="UER00474"/>
</dbReference>
<dbReference type="Proteomes" id="UP000001114">
    <property type="component" value="Chromosome"/>
</dbReference>
<dbReference type="GO" id="GO:0005737">
    <property type="term" value="C:cytoplasm"/>
    <property type="evidence" value="ECO:0007669"/>
    <property type="project" value="UniProtKB-SubCell"/>
</dbReference>
<dbReference type="GO" id="GO:0008676">
    <property type="term" value="F:3-deoxy-8-phosphooctulonate synthase activity"/>
    <property type="evidence" value="ECO:0007669"/>
    <property type="project" value="UniProtKB-UniRule"/>
</dbReference>
<dbReference type="GO" id="GO:0019294">
    <property type="term" value="P:keto-3-deoxy-D-manno-octulosonic acid biosynthetic process"/>
    <property type="evidence" value="ECO:0007669"/>
    <property type="project" value="UniProtKB-UniRule"/>
</dbReference>
<dbReference type="FunFam" id="3.20.20.70:FF:000058">
    <property type="entry name" value="2-dehydro-3-deoxyphosphooctonate aldolase"/>
    <property type="match status" value="1"/>
</dbReference>
<dbReference type="Gene3D" id="3.20.20.70">
    <property type="entry name" value="Aldolase class I"/>
    <property type="match status" value="1"/>
</dbReference>
<dbReference type="HAMAP" id="MF_00056">
    <property type="entry name" value="KDO8P_synth"/>
    <property type="match status" value="1"/>
</dbReference>
<dbReference type="InterPro" id="IPR013785">
    <property type="entry name" value="Aldolase_TIM"/>
</dbReference>
<dbReference type="InterPro" id="IPR006218">
    <property type="entry name" value="DAHP1/KDSA"/>
</dbReference>
<dbReference type="InterPro" id="IPR006269">
    <property type="entry name" value="KDO8P_synthase"/>
</dbReference>
<dbReference type="NCBIfam" id="TIGR01362">
    <property type="entry name" value="KDO8P_synth"/>
    <property type="match status" value="1"/>
</dbReference>
<dbReference type="NCBIfam" id="NF003543">
    <property type="entry name" value="PRK05198.1"/>
    <property type="match status" value="1"/>
</dbReference>
<dbReference type="NCBIfam" id="NF009109">
    <property type="entry name" value="PRK12457.1"/>
    <property type="match status" value="1"/>
</dbReference>
<dbReference type="PANTHER" id="PTHR21057">
    <property type="entry name" value="PHOSPHO-2-DEHYDRO-3-DEOXYHEPTONATE ALDOLASE"/>
    <property type="match status" value="1"/>
</dbReference>
<dbReference type="Pfam" id="PF00793">
    <property type="entry name" value="DAHP_synth_1"/>
    <property type="match status" value="1"/>
</dbReference>
<dbReference type="SUPFAM" id="SSF51569">
    <property type="entry name" value="Aldolase"/>
    <property type="match status" value="1"/>
</dbReference>
<name>KDSA_ACTSZ</name>
<organism>
    <name type="scientific">Actinobacillus succinogenes (strain ATCC 55618 / DSM 22257 / CCUG 43843 / 130Z)</name>
    <dbReference type="NCBI Taxonomy" id="339671"/>
    <lineage>
        <taxon>Bacteria</taxon>
        <taxon>Pseudomonadati</taxon>
        <taxon>Pseudomonadota</taxon>
        <taxon>Gammaproteobacteria</taxon>
        <taxon>Pasteurellales</taxon>
        <taxon>Pasteurellaceae</taxon>
        <taxon>Actinobacillus</taxon>
    </lineage>
</organism>
<accession>A6VP95</accession>
<evidence type="ECO:0000255" key="1">
    <source>
        <dbReference type="HAMAP-Rule" id="MF_00056"/>
    </source>
</evidence>
<feature type="chain" id="PRO_1000071152" description="2-dehydro-3-deoxyphosphooctonate aldolase">
    <location>
        <begin position="1"/>
        <end position="284"/>
    </location>
</feature>
<proteinExistence type="inferred from homology"/>
<gene>
    <name evidence="1" type="primary">kdsA</name>
    <name type="ordered locus">Asuc_1433</name>
</gene>
<reference key="1">
    <citation type="journal article" date="2010" name="BMC Genomics">
        <title>A genomic perspective on the potential of Actinobacillus succinogenes for industrial succinate production.</title>
        <authorList>
            <person name="McKinlay J.B."/>
            <person name="Laivenieks M."/>
            <person name="Schindler B.D."/>
            <person name="McKinlay A.A."/>
            <person name="Siddaramappa S."/>
            <person name="Challacombe J.F."/>
            <person name="Lowry S.R."/>
            <person name="Clum A."/>
            <person name="Lapidus A.L."/>
            <person name="Burkhart K.B."/>
            <person name="Harkins V."/>
            <person name="Vieille C."/>
        </authorList>
    </citation>
    <scope>NUCLEOTIDE SEQUENCE [LARGE SCALE GENOMIC DNA]</scope>
    <source>
        <strain>ATCC 55618 / DSM 22257 / CCUG 43843 / 130Z</strain>
    </source>
</reference>
<protein>
    <recommendedName>
        <fullName evidence="1">2-dehydro-3-deoxyphosphooctonate aldolase</fullName>
        <ecNumber evidence="1">2.5.1.55</ecNumber>
    </recommendedName>
    <alternativeName>
        <fullName evidence="1">3-deoxy-D-manno-octulosonic acid 8-phosphate synthase</fullName>
    </alternativeName>
    <alternativeName>
        <fullName evidence="1">KDO-8-phosphate synthase</fullName>
        <shortName evidence="1">KDO 8-P synthase</shortName>
        <shortName evidence="1">KDOPS</shortName>
    </alternativeName>
    <alternativeName>
        <fullName evidence="1">Phospho-2-dehydro-3-deoxyoctonate aldolase</fullName>
    </alternativeName>
</protein>
<comment type="catalytic activity">
    <reaction evidence="1">
        <text>D-arabinose 5-phosphate + phosphoenolpyruvate + H2O = 3-deoxy-alpha-D-manno-2-octulosonate-8-phosphate + phosphate</text>
        <dbReference type="Rhea" id="RHEA:14053"/>
        <dbReference type="ChEBI" id="CHEBI:15377"/>
        <dbReference type="ChEBI" id="CHEBI:43474"/>
        <dbReference type="ChEBI" id="CHEBI:57693"/>
        <dbReference type="ChEBI" id="CHEBI:58702"/>
        <dbReference type="ChEBI" id="CHEBI:85985"/>
        <dbReference type="EC" id="2.5.1.55"/>
    </reaction>
</comment>
<comment type="pathway">
    <text evidence="1">Carbohydrate biosynthesis; 3-deoxy-D-manno-octulosonate biosynthesis; 3-deoxy-D-manno-octulosonate from D-ribulose 5-phosphate: step 2/3.</text>
</comment>
<comment type="pathway">
    <text evidence="1">Bacterial outer membrane biogenesis; lipopolysaccharide biosynthesis.</text>
</comment>
<comment type="subcellular location">
    <subcellularLocation>
        <location evidence="1">Cytoplasm</location>
    </subcellularLocation>
</comment>
<comment type="similarity">
    <text evidence="1">Belongs to the KdsA family.</text>
</comment>
<sequence length="284" mass="30917">MTNKTVKIGNIDVANHKPFVLFGGMNVLESRDMAMQVCEKYVEVTDKLGVPYVFKASFDKANRSSIHSYRGPGMEEGLKIFQELKKTFGVKVIADVHEIYQCNPVAEVVDVIQLPAFLARQTDLVEAMARTGAVINVKKPQFLSPGQMGNIVEKIEECGNDKVILCDRGTNFGYDNLVVDMLGFGVMKKASKGCPVIFDVTHSLQCRDPFGAASGGRREQVTELARAGMAVGIAGLFLEAHPDPNNAKCDGPSALPLSALEGFVVQMKAIDELVKSFPELDTSK</sequence>
<keyword id="KW-0963">Cytoplasm</keyword>
<keyword id="KW-0448">Lipopolysaccharide biosynthesis</keyword>
<keyword id="KW-1185">Reference proteome</keyword>
<keyword id="KW-0808">Transferase</keyword>